<name>LEUD_ECOL6</name>
<comment type="function">
    <text evidence="1">Catalyzes the isomerization between 2-isopropylmalate and 3-isopropylmalate, via the formation of 2-isopropylmaleate.</text>
</comment>
<comment type="catalytic activity">
    <reaction>
        <text>(2R,3S)-3-isopropylmalate = (2S)-2-isopropylmalate</text>
        <dbReference type="Rhea" id="RHEA:32287"/>
        <dbReference type="ChEBI" id="CHEBI:1178"/>
        <dbReference type="ChEBI" id="CHEBI:35121"/>
        <dbReference type="EC" id="4.2.1.33"/>
    </reaction>
</comment>
<comment type="pathway">
    <text>Amino-acid biosynthesis; L-leucine biosynthesis; L-leucine from 3-methyl-2-oxobutanoate: step 2/4.</text>
</comment>
<comment type="subunit">
    <text evidence="1">Heterodimer of LeuC and LeuD.</text>
</comment>
<comment type="similarity">
    <text evidence="2">Belongs to the LeuD family. LeuD type 1 subfamily.</text>
</comment>
<keyword id="KW-0028">Amino-acid biosynthesis</keyword>
<keyword id="KW-0100">Branched-chain amino acid biosynthesis</keyword>
<keyword id="KW-0432">Leucine biosynthesis</keyword>
<keyword id="KW-0456">Lyase</keyword>
<keyword id="KW-1185">Reference proteome</keyword>
<feature type="initiator methionine" description="Removed" evidence="1">
    <location>
        <position position="1"/>
    </location>
</feature>
<feature type="chain" id="PRO_0000141821" description="3-isopropylmalate dehydratase small subunit">
    <location>
        <begin position="2"/>
        <end position="201"/>
    </location>
</feature>
<proteinExistence type="inferred from homology"/>
<accession>Q8FL79</accession>
<reference key="1">
    <citation type="journal article" date="2002" name="Proc. Natl. Acad. Sci. U.S.A.">
        <title>Extensive mosaic structure revealed by the complete genome sequence of uropathogenic Escherichia coli.</title>
        <authorList>
            <person name="Welch R.A."/>
            <person name="Burland V."/>
            <person name="Plunkett G. III"/>
            <person name="Redford P."/>
            <person name="Roesch P."/>
            <person name="Rasko D."/>
            <person name="Buckles E.L."/>
            <person name="Liou S.-R."/>
            <person name="Boutin A."/>
            <person name="Hackett J."/>
            <person name="Stroud D."/>
            <person name="Mayhew G.F."/>
            <person name="Rose D.J."/>
            <person name="Zhou S."/>
            <person name="Schwartz D.C."/>
            <person name="Perna N.T."/>
            <person name="Mobley H.L.T."/>
            <person name="Donnenberg M.S."/>
            <person name="Blattner F.R."/>
        </authorList>
    </citation>
    <scope>NUCLEOTIDE SEQUENCE [LARGE SCALE GENOMIC DNA]</scope>
    <source>
        <strain>CFT073 / ATCC 700928 / UPEC</strain>
    </source>
</reference>
<sequence>MAEKFIKHTGLVVPLDAANVDTDAIIPKQFLQKVTRTGFGAHLFNDWRFLDEKGQQPNPDFVLNFPQYQGASILLARENFGCGSSREHAPWALTDYGFKVVIAPSFADIFYGNSFNNQLLPVKLSDAEVDELFALVKANPGIHFDVDLEAQEVKAGEKTYRFTIDAFRRHCMMNGLDSIGLTLQHDDAIASYEEKQPAFMR</sequence>
<organism>
    <name type="scientific">Escherichia coli O6:H1 (strain CFT073 / ATCC 700928 / UPEC)</name>
    <dbReference type="NCBI Taxonomy" id="199310"/>
    <lineage>
        <taxon>Bacteria</taxon>
        <taxon>Pseudomonadati</taxon>
        <taxon>Pseudomonadota</taxon>
        <taxon>Gammaproteobacteria</taxon>
        <taxon>Enterobacterales</taxon>
        <taxon>Enterobacteriaceae</taxon>
        <taxon>Escherichia</taxon>
    </lineage>
</organism>
<evidence type="ECO:0000250" key="1"/>
<evidence type="ECO:0000305" key="2"/>
<dbReference type="EC" id="4.2.1.33"/>
<dbReference type="EMBL" id="AE014075">
    <property type="protein sequence ID" value="AAN78583.1"/>
    <property type="molecule type" value="Genomic_DNA"/>
</dbReference>
<dbReference type="RefSeq" id="WP_000818231.1">
    <property type="nucleotide sequence ID" value="NZ_CP051263.1"/>
</dbReference>
<dbReference type="SMR" id="Q8FL79"/>
<dbReference type="STRING" id="199310.c0087"/>
<dbReference type="KEGG" id="ecc:c0087"/>
<dbReference type="eggNOG" id="COG0066">
    <property type="taxonomic scope" value="Bacteria"/>
</dbReference>
<dbReference type="HOGENOM" id="CLU_081378_0_3_6"/>
<dbReference type="BioCyc" id="ECOL199310:C0087-MONOMER"/>
<dbReference type="UniPathway" id="UPA00048">
    <property type="reaction ID" value="UER00071"/>
</dbReference>
<dbReference type="Proteomes" id="UP000001410">
    <property type="component" value="Chromosome"/>
</dbReference>
<dbReference type="GO" id="GO:0009316">
    <property type="term" value="C:3-isopropylmalate dehydratase complex"/>
    <property type="evidence" value="ECO:0007669"/>
    <property type="project" value="InterPro"/>
</dbReference>
<dbReference type="GO" id="GO:0003861">
    <property type="term" value="F:3-isopropylmalate dehydratase activity"/>
    <property type="evidence" value="ECO:0007669"/>
    <property type="project" value="UniProtKB-UniRule"/>
</dbReference>
<dbReference type="GO" id="GO:0009098">
    <property type="term" value="P:L-leucine biosynthetic process"/>
    <property type="evidence" value="ECO:0007669"/>
    <property type="project" value="UniProtKB-UniRule"/>
</dbReference>
<dbReference type="CDD" id="cd01577">
    <property type="entry name" value="IPMI_Swivel"/>
    <property type="match status" value="1"/>
</dbReference>
<dbReference type="FunFam" id="3.20.19.10:FF:000003">
    <property type="entry name" value="3-isopropylmalate dehydratase small subunit"/>
    <property type="match status" value="1"/>
</dbReference>
<dbReference type="Gene3D" id="3.20.19.10">
    <property type="entry name" value="Aconitase, domain 4"/>
    <property type="match status" value="1"/>
</dbReference>
<dbReference type="HAMAP" id="MF_01031">
    <property type="entry name" value="LeuD_type1"/>
    <property type="match status" value="1"/>
</dbReference>
<dbReference type="InterPro" id="IPR004431">
    <property type="entry name" value="3-IsopropMal_deHydase_ssu"/>
</dbReference>
<dbReference type="InterPro" id="IPR015928">
    <property type="entry name" value="Aconitase/3IPM_dehydase_swvl"/>
</dbReference>
<dbReference type="InterPro" id="IPR000573">
    <property type="entry name" value="AconitaseA/IPMdHydase_ssu_swvl"/>
</dbReference>
<dbReference type="InterPro" id="IPR033940">
    <property type="entry name" value="IPMI_Swivel"/>
</dbReference>
<dbReference type="InterPro" id="IPR050075">
    <property type="entry name" value="LeuD"/>
</dbReference>
<dbReference type="NCBIfam" id="TIGR00171">
    <property type="entry name" value="leuD"/>
    <property type="match status" value="1"/>
</dbReference>
<dbReference type="NCBIfam" id="NF002458">
    <property type="entry name" value="PRK01641.1"/>
    <property type="match status" value="1"/>
</dbReference>
<dbReference type="PANTHER" id="PTHR43345:SF5">
    <property type="entry name" value="3-ISOPROPYLMALATE DEHYDRATASE SMALL SUBUNIT"/>
    <property type="match status" value="1"/>
</dbReference>
<dbReference type="PANTHER" id="PTHR43345">
    <property type="entry name" value="3-ISOPROPYLMALATE DEHYDRATASE SMALL SUBUNIT 2-RELATED-RELATED"/>
    <property type="match status" value="1"/>
</dbReference>
<dbReference type="Pfam" id="PF00694">
    <property type="entry name" value="Aconitase_C"/>
    <property type="match status" value="1"/>
</dbReference>
<dbReference type="SUPFAM" id="SSF52016">
    <property type="entry name" value="LeuD/IlvD-like"/>
    <property type="match status" value="1"/>
</dbReference>
<gene>
    <name type="primary">leuD</name>
    <name type="ordered locus">c0087</name>
</gene>
<protein>
    <recommendedName>
        <fullName>3-isopropylmalate dehydratase small subunit</fullName>
        <ecNumber>4.2.1.33</ecNumber>
    </recommendedName>
    <alternativeName>
        <fullName>Alpha-IPM isomerase</fullName>
        <shortName>IPMI</shortName>
    </alternativeName>
    <alternativeName>
        <fullName>Isopropylmalate isomerase</fullName>
    </alternativeName>
</protein>